<sequence length="542" mass="58085">MGRADPEEGQLPAPVKPPDGGWGWIVLFGCFVITGFSYAFPKAVSVYFKELMKDFHVGYSDTAWISSIMLAMLYGTGPVCSIMVNQFGCRPVMLIGGLLASSGMILASFTTNIIELYLTAGVLTGLGMALNFQPSLIMLGTYFDKRRPLANGLAAAGSPVFLSSLSPLGQVLLEKFGWRGGFLIMGGLLLNCCTCGAVMRPLDAGMKRKTEKAQDKYEAKEMLPMGGKSEEGISTTDGTKKTKKAKKKPKKGKKLLDFSIFSNRGFIIYTISKFILVLGLFVPPILLVNYAKDTGVPDTEAAFLLSIIGFIDIFARPACGMVAGLKWVRPHVAYLFSFAMLFNGLTDICSARASNYTGLVIFCVFFGISYGMVGALQFEVLMAIVGSQKFSSAIGLVLLIEAFAVLIGPPSAGRLVDALKNYEVIFYLAGSEVVLSALFLAMATYCCLNRGKKTPPPEKNPSAGGGSDTEEAESDVQEAEEHSSDNHQPAHGTDKATVAANEEANHVEDEQSGEGGRCPEADGEVSSRAGCNADQTVERDSF</sequence>
<dbReference type="EMBL" id="U15685">
    <property type="protein sequence ID" value="AAB52367.1"/>
    <property type="molecule type" value="mRNA"/>
</dbReference>
<dbReference type="EMBL" id="AF000240">
    <property type="protein sequence ID" value="AAB61338.1"/>
    <property type="molecule type" value="Genomic_DNA"/>
</dbReference>
<dbReference type="EMBL" id="AADN05000523">
    <property type="status" value="NOT_ANNOTATED_CDS"/>
    <property type="molecule type" value="Genomic_DNA"/>
</dbReference>
<dbReference type="PIR" id="JC5507">
    <property type="entry name" value="JC5507"/>
</dbReference>
<dbReference type="RefSeq" id="NP_990471.2">
    <property type="nucleotide sequence ID" value="NM_205140.2"/>
</dbReference>
<dbReference type="RefSeq" id="XP_046762732.1">
    <property type="nucleotide sequence ID" value="XM_046906776.1"/>
</dbReference>
<dbReference type="RefSeq" id="XP_046769316.1">
    <property type="nucleotide sequence ID" value="XM_046913360.1"/>
</dbReference>
<dbReference type="SMR" id="Q90632"/>
<dbReference type="FunCoup" id="Q90632">
    <property type="interactions" value="28"/>
</dbReference>
<dbReference type="STRING" id="9031.ENSGALP00000044229"/>
<dbReference type="ChEMBL" id="CHEMBL5291533"/>
<dbReference type="PaxDb" id="9031-ENSGALP00000020054"/>
<dbReference type="Ensembl" id="ENSGALT00010031278.1">
    <property type="protein sequence ID" value="ENSGALP00010018229.1"/>
    <property type="gene ID" value="ENSGALG00010013052.1"/>
</dbReference>
<dbReference type="GeneID" id="396041"/>
<dbReference type="KEGG" id="gga:396041"/>
<dbReference type="CTD" id="23539"/>
<dbReference type="VEuPathDB" id="HostDB:geneid_396041"/>
<dbReference type="eggNOG" id="KOG2504">
    <property type="taxonomic scope" value="Eukaryota"/>
</dbReference>
<dbReference type="GeneTree" id="ENSGT00940000161934"/>
<dbReference type="HOGENOM" id="CLU_001265_59_1_1"/>
<dbReference type="InParanoid" id="Q90632"/>
<dbReference type="OMA" id="SMPQVHI"/>
<dbReference type="OrthoDB" id="6499973at2759"/>
<dbReference type="PhylomeDB" id="Q90632"/>
<dbReference type="TreeFam" id="TF313792"/>
<dbReference type="Reactome" id="R-GGA-210991">
    <property type="pathway name" value="Basigin interactions"/>
</dbReference>
<dbReference type="Reactome" id="R-GGA-433692">
    <property type="pathway name" value="Proton-coupled monocarboxylate transport"/>
</dbReference>
<dbReference type="PRO" id="PR:Q90632"/>
<dbReference type="Proteomes" id="UP000000539">
    <property type="component" value="Chromosome 1"/>
</dbReference>
<dbReference type="Bgee" id="ENSGALG00000036897">
    <property type="expression patterns" value="Expressed in cerebellum"/>
</dbReference>
<dbReference type="GO" id="GO:0016324">
    <property type="term" value="C:apical plasma membrane"/>
    <property type="evidence" value="ECO:0007669"/>
    <property type="project" value="Ensembl"/>
</dbReference>
<dbReference type="GO" id="GO:0016323">
    <property type="term" value="C:basolateral plasma membrane"/>
    <property type="evidence" value="ECO:0000318"/>
    <property type="project" value="GO_Central"/>
</dbReference>
<dbReference type="GO" id="GO:0005886">
    <property type="term" value="C:plasma membrane"/>
    <property type="evidence" value="ECO:0000318"/>
    <property type="project" value="GO_Central"/>
</dbReference>
<dbReference type="GO" id="GO:0008028">
    <property type="term" value="F:monocarboxylic acid transmembrane transporter activity"/>
    <property type="evidence" value="ECO:0000318"/>
    <property type="project" value="GO_Central"/>
</dbReference>
<dbReference type="GO" id="GO:0015293">
    <property type="term" value="F:symporter activity"/>
    <property type="evidence" value="ECO:0007669"/>
    <property type="project" value="UniProtKB-KW"/>
</dbReference>
<dbReference type="CDD" id="cd17430">
    <property type="entry name" value="MFS_MCT3_4"/>
    <property type="match status" value="1"/>
</dbReference>
<dbReference type="Gene3D" id="1.20.1250.20">
    <property type="entry name" value="MFS general substrate transporter like domains"/>
    <property type="match status" value="1"/>
</dbReference>
<dbReference type="InterPro" id="IPR004743">
    <property type="entry name" value="MCT"/>
</dbReference>
<dbReference type="InterPro" id="IPR011701">
    <property type="entry name" value="MFS"/>
</dbReference>
<dbReference type="InterPro" id="IPR020846">
    <property type="entry name" value="MFS_dom"/>
</dbReference>
<dbReference type="InterPro" id="IPR036259">
    <property type="entry name" value="MFS_trans_sf"/>
</dbReference>
<dbReference type="InterPro" id="IPR050327">
    <property type="entry name" value="Proton-linked_MCT"/>
</dbReference>
<dbReference type="NCBIfam" id="TIGR00892">
    <property type="entry name" value="2A0113"/>
    <property type="match status" value="1"/>
</dbReference>
<dbReference type="PANTHER" id="PTHR11360">
    <property type="entry name" value="MONOCARBOXYLATE TRANSPORTER"/>
    <property type="match status" value="1"/>
</dbReference>
<dbReference type="PANTHER" id="PTHR11360:SF26">
    <property type="entry name" value="MONOCARBOXYLATE TRANSPORTER 3"/>
    <property type="match status" value="1"/>
</dbReference>
<dbReference type="Pfam" id="PF07690">
    <property type="entry name" value="MFS_1"/>
    <property type="match status" value="1"/>
</dbReference>
<dbReference type="SUPFAM" id="SSF103473">
    <property type="entry name" value="MFS general substrate transporter"/>
    <property type="match status" value="1"/>
</dbReference>
<dbReference type="PROSITE" id="PS50850">
    <property type="entry name" value="MFS"/>
    <property type="match status" value="1"/>
</dbReference>
<feature type="chain" id="PRO_0000211393" description="Monocarboxylate transporter 3">
    <location>
        <begin position="1"/>
        <end position="542"/>
    </location>
</feature>
<feature type="topological domain" description="Cytoplasmic" evidence="3">
    <location>
        <begin position="1"/>
        <end position="19"/>
    </location>
</feature>
<feature type="transmembrane region" description="Helical" evidence="3">
    <location>
        <begin position="20"/>
        <end position="40"/>
    </location>
</feature>
<feature type="topological domain" description="Extracellular" evidence="3">
    <location>
        <begin position="41"/>
        <end position="63"/>
    </location>
</feature>
<feature type="transmembrane region" description="Helical" evidence="3">
    <location>
        <begin position="64"/>
        <end position="84"/>
    </location>
</feature>
<feature type="topological domain" description="Cytoplasmic" evidence="3">
    <location>
        <begin position="85"/>
        <end position="93"/>
    </location>
</feature>
<feature type="transmembrane region" description="Helical" evidence="3">
    <location>
        <begin position="94"/>
        <end position="114"/>
    </location>
</feature>
<feature type="topological domain" description="Extracellular" evidence="3">
    <location>
        <begin position="115"/>
        <end position="119"/>
    </location>
</feature>
<feature type="transmembrane region" description="Helical" evidence="3">
    <location>
        <begin position="120"/>
        <end position="140"/>
    </location>
</feature>
<feature type="topological domain" description="Cytoplasmic" evidence="3">
    <location>
        <begin position="141"/>
        <end position="152"/>
    </location>
</feature>
<feature type="transmembrane region" description="Helical" evidence="3">
    <location>
        <begin position="153"/>
        <end position="173"/>
    </location>
</feature>
<feature type="topological domain" description="Extracellular" evidence="3">
    <location>
        <begin position="174"/>
        <end position="181"/>
    </location>
</feature>
<feature type="transmembrane region" description="Helical" evidence="3">
    <location>
        <begin position="182"/>
        <end position="202"/>
    </location>
</feature>
<feature type="topological domain" description="Cytoplasmic" evidence="3">
    <location>
        <begin position="203"/>
        <end position="265"/>
    </location>
</feature>
<feature type="transmembrane region" description="Helical" evidence="3">
    <location>
        <begin position="266"/>
        <end position="286"/>
    </location>
</feature>
<feature type="topological domain" description="Extracellular" evidence="3">
    <location>
        <begin position="287"/>
        <end position="301"/>
    </location>
</feature>
<feature type="transmembrane region" description="Helical" evidence="3">
    <location>
        <begin position="302"/>
        <end position="322"/>
    </location>
</feature>
<feature type="topological domain" description="Cytoplasmic" evidence="3">
    <location>
        <begin position="323"/>
        <end position="330"/>
    </location>
</feature>
<feature type="transmembrane region" description="Helical" evidence="3">
    <location>
        <begin position="331"/>
        <end position="351"/>
    </location>
</feature>
<feature type="topological domain" description="Extracellular" evidence="3">
    <location>
        <begin position="352"/>
        <end position="357"/>
    </location>
</feature>
<feature type="transmembrane region" description="Helical" evidence="3">
    <location>
        <begin position="358"/>
        <end position="378"/>
    </location>
</feature>
<feature type="topological domain" description="Cytoplasmic" evidence="3">
    <location>
        <begin position="379"/>
        <end position="392"/>
    </location>
</feature>
<feature type="transmembrane region" description="Helical" evidence="3">
    <location>
        <begin position="393"/>
        <end position="413"/>
    </location>
</feature>
<feature type="topological domain" description="Extracellular" evidence="3">
    <location>
        <begin position="414"/>
        <end position="423"/>
    </location>
</feature>
<feature type="transmembrane region" description="Helical" evidence="3">
    <location>
        <begin position="424"/>
        <end position="444"/>
    </location>
</feature>
<feature type="topological domain" description="Cytoplasmic" evidence="3">
    <location>
        <begin position="445"/>
        <end position="542"/>
    </location>
</feature>
<feature type="region of interest" description="Disordered" evidence="4">
    <location>
        <begin position="226"/>
        <end position="247"/>
    </location>
</feature>
<feature type="region of interest" description="Disordered" evidence="4">
    <location>
        <begin position="453"/>
        <end position="542"/>
    </location>
</feature>
<feature type="region of interest" description="Basolateral sorting signal" evidence="2">
    <location>
        <begin position="465"/>
        <end position="510"/>
    </location>
</feature>
<feature type="region of interest" description="Basolateral sorting signal" evidence="2">
    <location>
        <begin position="511"/>
        <end position="532"/>
    </location>
</feature>
<feature type="compositionally biased region" description="Acidic residues" evidence="4">
    <location>
        <begin position="468"/>
        <end position="478"/>
    </location>
</feature>
<feature type="sequence conflict" description="In Ref. 1; AAB52367." ref="1">
    <original>P</original>
    <variation>R</variation>
    <location>
        <position position="6"/>
    </location>
</feature>
<feature type="sequence conflict" description="In Ref. 1; AAB52367." ref="1">
    <original>M</original>
    <variation>I</variation>
    <location>
        <position position="225"/>
    </location>
</feature>
<feature type="sequence conflict" description="In Ref. 1; AAB52367." ref="1">
    <original>A</original>
    <variation>P</variation>
    <location>
        <position position="291"/>
    </location>
</feature>
<feature type="sequence conflict" description="In Ref. 1; AAB52367." ref="1">
    <original>L</original>
    <variation>S</variation>
    <location>
        <position position="345"/>
    </location>
</feature>
<feature type="sequence conflict" description="In Ref. 1; AAB52367." ref="1">
    <original>AM</original>
    <variation>PW</variation>
    <location>
        <begin position="441"/>
        <end position="442"/>
    </location>
</feature>
<feature type="sequence conflict" description="In Ref. 1; AAB52367." ref="1">
    <original>V</original>
    <variation>A</variation>
    <location>
        <position position="525"/>
    </location>
</feature>
<keyword id="KW-1003">Cell membrane</keyword>
<keyword id="KW-0472">Membrane</keyword>
<keyword id="KW-1185">Reference proteome</keyword>
<keyword id="KW-0769">Symport</keyword>
<keyword id="KW-0812">Transmembrane</keyword>
<keyword id="KW-1133">Transmembrane helix</keyword>
<keyword id="KW-0813">Transport</keyword>
<protein>
    <recommendedName>
        <fullName>Monocarboxylate transporter 3</fullName>
        <shortName>MCT 3</shortName>
    </recommendedName>
    <alternativeName>
        <fullName evidence="8">Retinal epithelial membrane protein</fullName>
    </alternativeName>
    <alternativeName>
        <fullName>Solute carrier family 16 member 8</fullName>
    </alternativeName>
</protein>
<reference key="1">
    <citation type="journal article" date="1995" name="Exp. Cell Res.">
        <title>Developmental expression and molecular cloning of REMP, a novel retinal epithelial membrane protein.</title>
        <authorList>
            <person name="Philp N.J."/>
            <person name="Chu P."/>
            <person name="Pan T.C."/>
            <person name="Zhang R.Z."/>
            <person name="Chu M.L."/>
            <person name="Stark K."/>
            <person name="Boettiger D."/>
            <person name="Yoon H."/>
            <person name="Kieber-Emmons T."/>
        </authorList>
    </citation>
    <scope>NUCLEOTIDE SEQUENCE [MRNA]</scope>
    <scope>DEVELOPMENTAL STAGE</scope>
    <scope>TISSUE SPECIFICITY</scope>
    <scope>SUBCELLULAR LOCATION</scope>
    <source>
        <tissue>Retinal pigment epithelium</tissue>
    </source>
</reference>
<reference key="2">
    <citation type="journal article" date="1997" name="Biochem. Biophys. Res. Commun.">
        <title>Identification of a unique monocarboxylate transporter (MCT3) in retinal pigment epithelium.</title>
        <authorList>
            <person name="Yoon H."/>
            <person name="Fanelli A."/>
            <person name="Grollman E.F."/>
            <person name="Philp N.J."/>
        </authorList>
    </citation>
    <scope>NUCLEOTIDE SEQUENCE [MRNA]</scope>
    <scope>TISSUE SPECIFICITY</scope>
    <scope>FUNCTION</scope>
    <source>
        <tissue>Retinal pigment epithelium</tissue>
    </source>
</reference>
<reference key="3">
    <citation type="journal article" date="1998" name="Exp. Eye Res.">
        <title>Genomic structure and developmental expression of the chicken monocarboxylate transporter MCT3 gene.</title>
        <authorList>
            <person name="Yoon H."/>
            <person name="Philp N.J."/>
        </authorList>
    </citation>
    <scope>NUCLEOTIDE SEQUENCE [GENOMIC DNA]</scope>
    <source>
        <strain>Leghorn</strain>
    </source>
</reference>
<reference key="4">
    <citation type="journal article" date="2004" name="Nature">
        <title>Sequence and comparative analysis of the chicken genome provide unique perspectives on vertebrate evolution.</title>
        <authorList>
            <person name="Hillier L.W."/>
            <person name="Miller W."/>
            <person name="Birney E."/>
            <person name="Warren W."/>
            <person name="Hardison R.C."/>
            <person name="Ponting C.P."/>
            <person name="Bork P."/>
            <person name="Burt D.W."/>
            <person name="Groenen M.A.M."/>
            <person name="Delany M.E."/>
            <person name="Dodgson J.B."/>
            <person name="Chinwalla A.T."/>
            <person name="Cliften P.F."/>
            <person name="Clifton S.W."/>
            <person name="Delehaunty K.D."/>
            <person name="Fronick C."/>
            <person name="Fulton R.S."/>
            <person name="Graves T.A."/>
            <person name="Kremitzki C."/>
            <person name="Layman D."/>
            <person name="Magrini V."/>
            <person name="McPherson J.D."/>
            <person name="Miner T.L."/>
            <person name="Minx P."/>
            <person name="Nash W.E."/>
            <person name="Nhan M.N."/>
            <person name="Nelson J.O."/>
            <person name="Oddy L.G."/>
            <person name="Pohl C.S."/>
            <person name="Randall-Maher J."/>
            <person name="Smith S.M."/>
            <person name="Wallis J.W."/>
            <person name="Yang S.-P."/>
            <person name="Romanov M.N."/>
            <person name="Rondelli C.M."/>
            <person name="Paton B."/>
            <person name="Smith J."/>
            <person name="Morrice D."/>
            <person name="Daniels L."/>
            <person name="Tempest H.G."/>
            <person name="Robertson L."/>
            <person name="Masabanda J.S."/>
            <person name="Griffin D.K."/>
            <person name="Vignal A."/>
            <person name="Fillon V."/>
            <person name="Jacobbson L."/>
            <person name="Kerje S."/>
            <person name="Andersson L."/>
            <person name="Crooijmans R.P."/>
            <person name="Aerts J."/>
            <person name="van der Poel J.J."/>
            <person name="Ellegren H."/>
            <person name="Caldwell R.B."/>
            <person name="Hubbard S.J."/>
            <person name="Grafham D.V."/>
            <person name="Kierzek A.M."/>
            <person name="McLaren S.R."/>
            <person name="Overton I.M."/>
            <person name="Arakawa H."/>
            <person name="Beattie K.J."/>
            <person name="Bezzubov Y."/>
            <person name="Boardman P.E."/>
            <person name="Bonfield J.K."/>
            <person name="Croning M.D.R."/>
            <person name="Davies R.M."/>
            <person name="Francis M.D."/>
            <person name="Humphray S.J."/>
            <person name="Scott C.E."/>
            <person name="Taylor R.G."/>
            <person name="Tickle C."/>
            <person name="Brown W.R.A."/>
            <person name="Rogers J."/>
            <person name="Buerstedde J.-M."/>
            <person name="Wilson S.A."/>
            <person name="Stubbs L."/>
            <person name="Ovcharenko I."/>
            <person name="Gordon L."/>
            <person name="Lucas S."/>
            <person name="Miller M.M."/>
            <person name="Inoko H."/>
            <person name="Shiina T."/>
            <person name="Kaufman J."/>
            <person name="Salomonsen J."/>
            <person name="Skjoedt K."/>
            <person name="Wong G.K.-S."/>
            <person name="Wang J."/>
            <person name="Liu B."/>
            <person name="Wang J."/>
            <person name="Yu J."/>
            <person name="Yang H."/>
            <person name="Nefedov M."/>
            <person name="Koriabine M."/>
            <person name="Dejong P.J."/>
            <person name="Goodstadt L."/>
            <person name="Webber C."/>
            <person name="Dickens N.J."/>
            <person name="Letunic I."/>
            <person name="Suyama M."/>
            <person name="Torrents D."/>
            <person name="von Mering C."/>
            <person name="Zdobnov E.M."/>
            <person name="Makova K."/>
            <person name="Nekrutenko A."/>
            <person name="Elnitski L."/>
            <person name="Eswara P."/>
            <person name="King D.C."/>
            <person name="Yang S.-P."/>
            <person name="Tyekucheva S."/>
            <person name="Radakrishnan A."/>
            <person name="Harris R.S."/>
            <person name="Chiaromonte F."/>
            <person name="Taylor J."/>
            <person name="He J."/>
            <person name="Rijnkels M."/>
            <person name="Griffiths-Jones S."/>
            <person name="Ureta-Vidal A."/>
            <person name="Hoffman M.M."/>
            <person name="Severin J."/>
            <person name="Searle S.M.J."/>
            <person name="Law A.S."/>
            <person name="Speed D."/>
            <person name="Waddington D."/>
            <person name="Cheng Z."/>
            <person name="Tuzun E."/>
            <person name="Eichler E."/>
            <person name="Bao Z."/>
            <person name="Flicek P."/>
            <person name="Shteynberg D.D."/>
            <person name="Brent M.R."/>
            <person name="Bye J.M."/>
            <person name="Huckle E.J."/>
            <person name="Chatterji S."/>
            <person name="Dewey C."/>
            <person name="Pachter L."/>
            <person name="Kouranov A."/>
            <person name="Mourelatos Z."/>
            <person name="Hatzigeorgiou A.G."/>
            <person name="Paterson A.H."/>
            <person name="Ivarie R."/>
            <person name="Brandstrom M."/>
            <person name="Axelsson E."/>
            <person name="Backstrom N."/>
            <person name="Berlin S."/>
            <person name="Webster M.T."/>
            <person name="Pourquie O."/>
            <person name="Reymond A."/>
            <person name="Ucla C."/>
            <person name="Antonarakis S.E."/>
            <person name="Long M."/>
            <person name="Emerson J.J."/>
            <person name="Betran E."/>
            <person name="Dupanloup I."/>
            <person name="Kaessmann H."/>
            <person name="Hinrichs A.S."/>
            <person name="Bejerano G."/>
            <person name="Furey T.S."/>
            <person name="Harte R.A."/>
            <person name="Raney B."/>
            <person name="Siepel A."/>
            <person name="Kent W.J."/>
            <person name="Haussler D."/>
            <person name="Eyras E."/>
            <person name="Castelo R."/>
            <person name="Abril J.F."/>
            <person name="Castellano S."/>
            <person name="Camara F."/>
            <person name="Parra G."/>
            <person name="Guigo R."/>
            <person name="Bourque G."/>
            <person name="Tesler G."/>
            <person name="Pevzner P.A."/>
            <person name="Smit A."/>
            <person name="Fulton L.A."/>
            <person name="Mardis E.R."/>
            <person name="Wilson R.K."/>
        </authorList>
    </citation>
    <scope>NUCLEOTIDE SEQUENCE [LARGE SCALE GENOMIC DNA]</scope>
    <source>
        <strain>Red jungle fowl</strain>
    </source>
</reference>
<reference key="5">
    <citation type="journal article" date="2000" name="Biochemistry">
        <title>Determination of transport kinetics of chick MCT3 monocarboxylate transporter from retinal pigment epithelium by expression in genetically modified yeast.</title>
        <authorList>
            <person name="Grollman E.F."/>
            <person name="Philp N.J."/>
            <person name="McPhie P."/>
            <person name="Ward R.D."/>
            <person name="Sauer B."/>
        </authorList>
    </citation>
    <scope>FUNCTION</scope>
    <scope>BIOPHYSICOCHEMICAL PROPERTIES</scope>
    <scope>TRANSPORTER ACTIVITY</scope>
    <scope>SUBCELLULAR LOCATION</scope>
</reference>
<comment type="function">
    <text evidence="1 11 12">Probable retinal pigment epithelium (RPE)-specific proton-coupled L-lactate transporter (Probable). May facilitate transport of lactate and H(+) out of the retina and could therefore play a role in pH and ion homeostasis of the outer retina (By similarity).</text>
</comment>
<comment type="catalytic activity">
    <reaction evidence="11">
        <text>(S)-lactate(in) + H(+)(in) = (S)-lactate(out) + H(+)(out)</text>
        <dbReference type="Rhea" id="RHEA:29415"/>
        <dbReference type="ChEBI" id="CHEBI:15378"/>
        <dbReference type="ChEBI" id="CHEBI:16651"/>
    </reaction>
</comment>
<comment type="biophysicochemical properties">
    <kinetics>
        <KM evidence="5">6 mM for L-lactate</KM>
    </kinetics>
</comment>
<comment type="subcellular location">
    <subcellularLocation>
        <location evidence="5 6">Basolateral cell membrane</location>
        <topology evidence="3">Multi-pass membrane protein</topology>
    </subcellularLocation>
    <text evidence="1 2">Basolateral sorting signals (BLSS) in C-terminal cytoplasmic tail ensure its basolateral expression (By similarity). Colocalizes with BSG in basolateral cell membrane of the retinal pigment epithelium (By similarity).</text>
</comment>
<comment type="tissue specificity">
    <text evidence="6 7">Retinal pigment epithelium.</text>
</comment>
<comment type="developmental stage">
    <text evidence="6">First detected at embryonic day 5 (5 dpc) in both apical and basolateral membranes. By 14 dpc the distribution is restricted to the basolateral surface of retinal pigment epithelium. Restricted to the basolateral membrane in adult.</text>
</comment>
<comment type="domain">
    <text evidence="2">The two basolateral sorting signals (BSS) are required to direct SLC16A8 to the basolateral membrane.</text>
</comment>
<comment type="similarity">
    <text evidence="10">Belongs to the major facilitator superfamily. Monocarboxylate porter (TC 2.A.1.13) family.</text>
</comment>
<evidence type="ECO:0000250" key="1">
    <source>
        <dbReference type="UniProtKB" id="O35308"/>
    </source>
</evidence>
<evidence type="ECO:0000250" key="2">
    <source>
        <dbReference type="UniProtKB" id="O95907"/>
    </source>
</evidence>
<evidence type="ECO:0000255" key="3"/>
<evidence type="ECO:0000256" key="4">
    <source>
        <dbReference type="SAM" id="MobiDB-lite"/>
    </source>
</evidence>
<evidence type="ECO:0000269" key="5">
    <source>
    </source>
</evidence>
<evidence type="ECO:0000269" key="6">
    <source>
    </source>
</evidence>
<evidence type="ECO:0000269" key="7">
    <source>
    </source>
</evidence>
<evidence type="ECO:0000303" key="8">
    <source>
    </source>
</evidence>
<evidence type="ECO:0000303" key="9">
    <source>
    </source>
</evidence>
<evidence type="ECO:0000305" key="10"/>
<evidence type="ECO:0000305" key="11">
    <source>
    </source>
</evidence>
<evidence type="ECO:0000305" key="12">
    <source>
    </source>
</evidence>
<gene>
    <name type="primary">SLC16A8</name>
    <name evidence="9" type="synonym">MCT3</name>
    <name evidence="8" type="synonym">REMP</name>
</gene>
<organism>
    <name type="scientific">Gallus gallus</name>
    <name type="common">Chicken</name>
    <dbReference type="NCBI Taxonomy" id="9031"/>
    <lineage>
        <taxon>Eukaryota</taxon>
        <taxon>Metazoa</taxon>
        <taxon>Chordata</taxon>
        <taxon>Craniata</taxon>
        <taxon>Vertebrata</taxon>
        <taxon>Euteleostomi</taxon>
        <taxon>Archelosauria</taxon>
        <taxon>Archosauria</taxon>
        <taxon>Dinosauria</taxon>
        <taxon>Saurischia</taxon>
        <taxon>Theropoda</taxon>
        <taxon>Coelurosauria</taxon>
        <taxon>Aves</taxon>
        <taxon>Neognathae</taxon>
        <taxon>Galloanserae</taxon>
        <taxon>Galliformes</taxon>
        <taxon>Phasianidae</taxon>
        <taxon>Phasianinae</taxon>
        <taxon>Gallus</taxon>
    </lineage>
</organism>
<proteinExistence type="evidence at protein level"/>
<name>MOT3_CHICK</name>
<accession>Q90632</accession>
<accession>A0A1D5NV56</accession>
<accession>O13151</accession>